<feature type="chain" id="PRO_0000078000" description="Nicotinamide riboside transporter PnuC">
    <location>
        <begin position="1"/>
        <end position="226"/>
    </location>
</feature>
<feature type="topological domain" description="Cytoplasmic" evidence="5">
    <location>
        <begin position="1"/>
        <end position="14"/>
    </location>
</feature>
<feature type="transmembrane region" description="Helical" evidence="2">
    <location>
        <begin position="15"/>
        <end position="35"/>
    </location>
</feature>
<feature type="topological domain" description="Periplasmic" evidence="2">
    <location>
        <position position="36"/>
    </location>
</feature>
<feature type="transmembrane region" description="Helical" evidence="2">
    <location>
        <begin position="37"/>
        <end position="57"/>
    </location>
</feature>
<feature type="topological domain" description="Cytoplasmic" evidence="2">
    <location>
        <begin position="58"/>
        <end position="65"/>
    </location>
</feature>
<feature type="transmembrane region" description="Helical" evidence="2">
    <location>
        <begin position="66"/>
        <end position="86"/>
    </location>
</feature>
<feature type="topological domain" description="Periplasmic" evidence="2">
    <location>
        <begin position="87"/>
        <end position="90"/>
    </location>
</feature>
<feature type="transmembrane region" description="Helical" evidence="2">
    <location>
        <begin position="91"/>
        <end position="110"/>
    </location>
</feature>
<feature type="topological domain" description="Cytoplasmic" evidence="2">
    <location>
        <begin position="111"/>
        <end position="123"/>
    </location>
</feature>
<feature type="transmembrane region" description="Helical" evidence="2">
    <location>
        <begin position="124"/>
        <end position="144"/>
    </location>
</feature>
<feature type="topological domain" description="Periplasmic" evidence="2">
    <location>
        <begin position="145"/>
        <end position="153"/>
    </location>
</feature>
<feature type="transmembrane region" description="Helical" evidence="2">
    <location>
        <begin position="154"/>
        <end position="174"/>
    </location>
</feature>
<feature type="topological domain" description="Cytoplasmic" evidence="2">
    <location>
        <begin position="175"/>
        <end position="179"/>
    </location>
</feature>
<feature type="transmembrane region" description="Helical" evidence="2">
    <location>
        <begin position="180"/>
        <end position="200"/>
    </location>
</feature>
<feature type="topological domain" description="Periplasmic" evidence="2">
    <location>
        <begin position="201"/>
        <end position="202"/>
    </location>
</feature>
<feature type="transmembrane region" description="Helical" evidence="2">
    <location>
        <begin position="203"/>
        <end position="223"/>
    </location>
</feature>
<feature type="topological domain" description="Cytoplasmic" evidence="5">
    <location>
        <begin position="224"/>
        <end position="226"/>
    </location>
</feature>
<feature type="binding site" evidence="1">
    <location>
        <position position="183"/>
    </location>
    <ligand>
        <name>beta-nicotinamide D-riboside</name>
        <dbReference type="ChEBI" id="CHEBI:15927"/>
    </ligand>
</feature>
<feature type="binding site" evidence="1">
    <location>
        <position position="187"/>
    </location>
    <ligand>
        <name>beta-nicotinamide D-riboside</name>
        <dbReference type="ChEBI" id="CHEBI:15927"/>
    </ligand>
</feature>
<protein>
    <recommendedName>
        <fullName>Nicotinamide riboside transporter PnuC</fullName>
    </recommendedName>
</protein>
<reference key="1">
    <citation type="journal article" date="2002" name="J. Bacteriol.">
        <title>Ribosylnicotinamide kinase domain of NadR protein: identification and implications in NAD biosynthesis.</title>
        <authorList>
            <person name="Kurnasov O.V."/>
            <person name="Polanuyer B.M."/>
            <person name="Ananta S."/>
            <person name="Sloutsky R."/>
            <person name="Tam A."/>
            <person name="Gerdes S.Y."/>
            <person name="Osterman A.L."/>
        </authorList>
    </citation>
    <scope>NUCLEOTIDE SEQUENCE [GENOMIC DNA]</scope>
    <source>
        <strain>ATCC 51907 / DSM 11121 / KW20 / Rd</strain>
    </source>
</reference>
<reference key="2">
    <citation type="journal article" date="1995" name="Science">
        <title>Whole-genome random sequencing and assembly of Haemophilus influenzae Rd.</title>
        <authorList>
            <person name="Fleischmann R.D."/>
            <person name="Adams M.D."/>
            <person name="White O."/>
            <person name="Clayton R.A."/>
            <person name="Kirkness E.F."/>
            <person name="Kerlavage A.R."/>
            <person name="Bult C.J."/>
            <person name="Tomb J.-F."/>
            <person name="Dougherty B.A."/>
            <person name="Merrick J.M."/>
            <person name="McKenney K."/>
            <person name="Sutton G.G."/>
            <person name="FitzHugh W."/>
            <person name="Fields C.A."/>
            <person name="Gocayne J.D."/>
            <person name="Scott J.D."/>
            <person name="Shirley R."/>
            <person name="Liu L.-I."/>
            <person name="Glodek A."/>
            <person name="Kelley J.M."/>
            <person name="Weidman J.F."/>
            <person name="Phillips C.A."/>
            <person name="Spriggs T."/>
            <person name="Hedblom E."/>
            <person name="Cotton M.D."/>
            <person name="Utterback T.R."/>
            <person name="Hanna M.C."/>
            <person name="Nguyen D.T."/>
            <person name="Saudek D.M."/>
            <person name="Brandon R.C."/>
            <person name="Fine L.D."/>
            <person name="Fritchman J.L."/>
            <person name="Fuhrmann J.L."/>
            <person name="Geoghagen N.S.M."/>
            <person name="Gnehm C.L."/>
            <person name="McDonald L.A."/>
            <person name="Small K.V."/>
            <person name="Fraser C.M."/>
            <person name="Smith H.O."/>
            <person name="Venter J.C."/>
        </authorList>
    </citation>
    <scope>NUCLEOTIDE SEQUENCE [LARGE SCALE GENOMIC DNA]</scope>
    <source>
        <strain>ATCC 51907 / DSM 11121 / KW20 / Rd</strain>
    </source>
</reference>
<reference key="3">
    <citation type="journal article" date="2004" name="Antimicrob. Agents Chemother.">
        <title>PnuC and the utilization of the nicotinamide riboside analog 3-aminopyridine in Haemophilus influenzae.</title>
        <authorList>
            <person name="Sauer E."/>
            <person name="Merdanovic M."/>
            <person name="Mortimer A.P."/>
            <person name="Bringmann G."/>
            <person name="Reidl J."/>
        </authorList>
    </citation>
    <scope>FUNCTION</scope>
    <scope>SUBSTRATE SPECIFICITY</scope>
    <scope>SUBCELLULAR LOCATION</scope>
    <scope>TOPOLOGY</scope>
    <source>
        <strain>ATCC 51907 / DSM 11121 / KW20 / Rd</strain>
    </source>
</reference>
<organism>
    <name type="scientific">Haemophilus influenzae (strain ATCC 51907 / DSM 11121 / KW20 / Rd)</name>
    <dbReference type="NCBI Taxonomy" id="71421"/>
    <lineage>
        <taxon>Bacteria</taxon>
        <taxon>Pseudomonadati</taxon>
        <taxon>Pseudomonadota</taxon>
        <taxon>Gammaproteobacteria</taxon>
        <taxon>Pasteurellales</taxon>
        <taxon>Pasteurellaceae</taxon>
        <taxon>Haemophilus</taxon>
    </lineage>
</organism>
<proteinExistence type="evidence at protein level"/>
<gene>
    <name type="primary">pnuC</name>
    <name type="ordered locus">HI_1077.1</name>
</gene>
<sequence>MTLAARLKQEFVSGWKPFEVVWLALFIIAQIWAYVQTPDSWLAMISGISGILCVVLVSKGKISNYFFGLIFAYTYFYVAWGSNFLGEMNTVLYVYLPSQFIGYFMWKANMQNSDGGESVIAKALTVKGWMTLIVVTTVGTLLFVQALQAAGGSSTGLDGLTTIITVAAQILMILRYREQWLLWIGLNILSIFLWAETPAIYLMYSAYLLNSLYGYYNWTKLVKRTN</sequence>
<dbReference type="EMBL" id="AF503632">
    <property type="protein sequence ID" value="AAM27449.1"/>
    <property type="molecule type" value="Genomic_DNA"/>
</dbReference>
<dbReference type="EMBL" id="L42023">
    <property type="protein sequence ID" value="AAC22744.1"/>
    <property type="status" value="ALT_FRAME"/>
    <property type="molecule type" value="Genomic_DNA"/>
</dbReference>
<dbReference type="SMR" id="Q57425"/>
<dbReference type="STRING" id="71421.HI_1077.1"/>
<dbReference type="EnsemblBacteria" id="AAC22744">
    <property type="protein sequence ID" value="AAC22744"/>
    <property type="gene ID" value="HI_1077.1"/>
</dbReference>
<dbReference type="KEGG" id="hin:HI_1077.1"/>
<dbReference type="eggNOG" id="COG3201">
    <property type="taxonomic scope" value="Bacteria"/>
</dbReference>
<dbReference type="HOGENOM" id="CLU_1956896_0_0_6"/>
<dbReference type="BRENDA" id="2.7.1.22">
    <property type="organism ID" value="2529"/>
</dbReference>
<dbReference type="Proteomes" id="UP000000579">
    <property type="component" value="Chromosome"/>
</dbReference>
<dbReference type="GO" id="GO:0005886">
    <property type="term" value="C:plasma membrane"/>
    <property type="evidence" value="ECO:0000318"/>
    <property type="project" value="GO_Central"/>
</dbReference>
<dbReference type="GO" id="GO:0034257">
    <property type="term" value="F:nicotinamide riboside transmembrane transporter activity"/>
    <property type="evidence" value="ECO:0000318"/>
    <property type="project" value="GO_Central"/>
</dbReference>
<dbReference type="InterPro" id="IPR006419">
    <property type="entry name" value="NMN_transpt_PnuC"/>
</dbReference>
<dbReference type="NCBIfam" id="TIGR01528">
    <property type="entry name" value="NMN_trans_PnuC"/>
    <property type="match status" value="1"/>
</dbReference>
<dbReference type="PANTHER" id="PTHR36122">
    <property type="entry name" value="NICOTINAMIDE RIBOSIDE TRANSPORTER PNUC"/>
    <property type="match status" value="1"/>
</dbReference>
<dbReference type="PANTHER" id="PTHR36122:SF2">
    <property type="entry name" value="NICOTINAMIDE RIBOSIDE TRANSPORTER PNUC"/>
    <property type="match status" value="1"/>
</dbReference>
<dbReference type="Pfam" id="PF04973">
    <property type="entry name" value="NMN_transporter"/>
    <property type="match status" value="1"/>
</dbReference>
<comment type="function">
    <text evidence="3">Required for nicotinamide riboside transport across the inner membrane.</text>
</comment>
<comment type="subcellular location">
    <subcellularLocation>
        <location evidence="3">Cell inner membrane</location>
        <topology evidence="3">Multi-pass membrane protein</topology>
    </subcellularLocation>
</comment>
<comment type="induction">
    <text>Repressed by NadR.</text>
</comment>
<comment type="similarity">
    <text evidence="4">Belongs to the nicotinamide ribonucleoside (NR) uptake permease (TC 4.B.1) family.</text>
</comment>
<comment type="sequence caution" evidence="4">
    <conflict type="frameshift">
        <sequence resource="EMBL-CDS" id="AAC22744"/>
    </conflict>
</comment>
<accession>Q57425</accession>
<accession>P96338</accession>
<accession>Q8L2G5</accession>
<keyword id="KW-0997">Cell inner membrane</keyword>
<keyword id="KW-1003">Cell membrane</keyword>
<keyword id="KW-0472">Membrane</keyword>
<keyword id="KW-0520">NAD</keyword>
<keyword id="KW-1185">Reference proteome</keyword>
<keyword id="KW-0812">Transmembrane</keyword>
<keyword id="KW-1133">Transmembrane helix</keyword>
<keyword id="KW-0813">Transport</keyword>
<name>PNUC_HAEIN</name>
<evidence type="ECO:0000250" key="1">
    <source>
        <dbReference type="UniProtKB" id="D2ZZC1"/>
    </source>
</evidence>
<evidence type="ECO:0000255" key="2"/>
<evidence type="ECO:0000269" key="3">
    <source>
    </source>
</evidence>
<evidence type="ECO:0000305" key="4"/>
<evidence type="ECO:0000305" key="5">
    <source>
    </source>
</evidence>